<protein>
    <recommendedName>
        <fullName>Putative uncharacterized protein YLR299C-A</fullName>
    </recommendedName>
</protein>
<name>YL299_YEAST</name>
<gene>
    <name type="ordered locus">YLR299C-A</name>
</gene>
<comment type="miscellaneous">
    <text evidence="1">Completely overlaps ECM38.</text>
</comment>
<comment type="caution">
    <text evidence="2">Product of a dubious gene prediction unlikely to encode a functional protein. Because of that it is not part of the S.cerevisiae S288c complete/reference proteome set.</text>
</comment>
<evidence type="ECO:0000305" key="1"/>
<evidence type="ECO:0000305" key="2">
    <source>
    </source>
</evidence>
<reference key="1">
    <citation type="journal article" date="1997" name="Nature">
        <title>The nucleotide sequence of Saccharomyces cerevisiae chromosome XII.</title>
        <authorList>
            <person name="Johnston M."/>
            <person name="Hillier L.W."/>
            <person name="Riles L."/>
            <person name="Albermann K."/>
            <person name="Andre B."/>
            <person name="Ansorge W."/>
            <person name="Benes V."/>
            <person name="Brueckner M."/>
            <person name="Delius H."/>
            <person name="Dubois E."/>
            <person name="Duesterhoeft A."/>
            <person name="Entian K.-D."/>
            <person name="Floeth M."/>
            <person name="Goffeau A."/>
            <person name="Hebling U."/>
            <person name="Heumann K."/>
            <person name="Heuss-Neitzel D."/>
            <person name="Hilbert H."/>
            <person name="Hilger F."/>
            <person name="Kleine K."/>
            <person name="Koetter P."/>
            <person name="Louis E.J."/>
            <person name="Messenguy F."/>
            <person name="Mewes H.-W."/>
            <person name="Miosga T."/>
            <person name="Moestl D."/>
            <person name="Mueller-Auer S."/>
            <person name="Nentwich U."/>
            <person name="Obermaier B."/>
            <person name="Piravandi E."/>
            <person name="Pohl T.M."/>
            <person name="Portetelle D."/>
            <person name="Purnelle B."/>
            <person name="Rechmann S."/>
            <person name="Rieger M."/>
            <person name="Rinke M."/>
            <person name="Rose M."/>
            <person name="Scharfe M."/>
            <person name="Scherens B."/>
            <person name="Scholler P."/>
            <person name="Schwager C."/>
            <person name="Schwarz S."/>
            <person name="Underwood A.P."/>
            <person name="Urrestarazu L.A."/>
            <person name="Vandenbol M."/>
            <person name="Verhasselt P."/>
            <person name="Vierendeels F."/>
            <person name="Voet M."/>
            <person name="Volckaert G."/>
            <person name="Voss H."/>
            <person name="Wambutt R."/>
            <person name="Wedler E."/>
            <person name="Wedler H."/>
            <person name="Zimmermann F.K."/>
            <person name="Zollner A."/>
            <person name="Hani J."/>
            <person name="Hoheisel J.D."/>
        </authorList>
    </citation>
    <scope>NUCLEOTIDE SEQUENCE [LARGE SCALE GENOMIC DNA]</scope>
    <source>
        <strain>ATCC 204508 / S288c</strain>
    </source>
</reference>
<reference key="2">
    <citation type="journal article" date="2014" name="G3 (Bethesda)">
        <title>The reference genome sequence of Saccharomyces cerevisiae: Then and now.</title>
        <authorList>
            <person name="Engel S.R."/>
            <person name="Dietrich F.S."/>
            <person name="Fisk D.G."/>
            <person name="Binkley G."/>
            <person name="Balakrishnan R."/>
            <person name="Costanzo M.C."/>
            <person name="Dwight S.S."/>
            <person name="Hitz B.C."/>
            <person name="Karra K."/>
            <person name="Nash R.S."/>
            <person name="Weng S."/>
            <person name="Wong E.D."/>
            <person name="Lloyd P."/>
            <person name="Skrzypek M.S."/>
            <person name="Miyasato S.R."/>
            <person name="Simison M."/>
            <person name="Cherry J.M."/>
        </authorList>
    </citation>
    <scope>GENOME REANNOTATION</scope>
    <source>
        <strain>ATCC 204508 / S288c</strain>
    </source>
</reference>
<reference key="3">
    <citation type="journal article" date="2002" name="Nat. Biotechnol.">
        <title>An integrated approach for finding overlooked genes in yeast.</title>
        <authorList>
            <person name="Kumar A."/>
            <person name="Harrison P.M."/>
            <person name="Cheung K.-H."/>
            <person name="Lan N."/>
            <person name="Echols N."/>
            <person name="Bertone P."/>
            <person name="Miller P."/>
            <person name="Gerstein M.B."/>
            <person name="Snyder M."/>
        </authorList>
    </citation>
    <scope>NUCLEOTIDE SEQUENCE [GENOMIC DNA]</scope>
</reference>
<proteinExistence type="uncertain"/>
<dbReference type="EMBL" id="U17243">
    <property type="status" value="NOT_ANNOTATED_CDS"/>
    <property type="molecule type" value="Genomic_DNA"/>
</dbReference>
<dbReference type="EMBL" id="AF479967">
    <property type="protein sequence ID" value="AAL79280.1"/>
    <property type="molecule type" value="Genomic_DNA"/>
</dbReference>
<dbReference type="STRING" id="4932.YLR299C-A"/>
<dbReference type="PaxDb" id="4932-YLR299C-A"/>
<dbReference type="EnsemblFungi" id="YLR299C-A_mRNA">
    <property type="protein sequence ID" value="YLR299C-A"/>
    <property type="gene ID" value="YLR299C-A"/>
</dbReference>
<dbReference type="AGR" id="SGD:S000028680"/>
<dbReference type="SGD" id="S000028680">
    <property type="gene designation" value="YLR299C-A"/>
</dbReference>
<dbReference type="HOGENOM" id="CLU_3406607_0_0_1"/>
<accession>Q8TGM3</accession>
<feature type="chain" id="PRO_0000299634" description="Putative uncharacterized protein YLR299C-A">
    <location>
        <begin position="1"/>
        <end position="30"/>
    </location>
</feature>
<organism>
    <name type="scientific">Saccharomyces cerevisiae (strain ATCC 204508 / S288c)</name>
    <name type="common">Baker's yeast</name>
    <dbReference type="NCBI Taxonomy" id="559292"/>
    <lineage>
        <taxon>Eukaryota</taxon>
        <taxon>Fungi</taxon>
        <taxon>Dikarya</taxon>
        <taxon>Ascomycota</taxon>
        <taxon>Saccharomycotina</taxon>
        <taxon>Saccharomycetes</taxon>
        <taxon>Saccharomycetales</taxon>
        <taxon>Saccharomycetaceae</taxon>
        <taxon>Saccharomyces</taxon>
    </lineage>
</organism>
<sequence>MPFSPDIAYSINYALGKYFFHRISHFLESA</sequence>